<keyword id="KW-0997">Cell inner membrane</keyword>
<keyword id="KW-1003">Cell membrane</keyword>
<keyword id="KW-0249">Electron transport</keyword>
<keyword id="KW-0472">Membrane</keyword>
<keyword id="KW-1185">Reference proteome</keyword>
<keyword id="KW-1278">Translocase</keyword>
<keyword id="KW-0812">Transmembrane</keyword>
<keyword id="KW-1133">Transmembrane helix</keyword>
<keyword id="KW-0813">Transport</keyword>
<organism>
    <name type="scientific">Hahella chejuensis (strain KCTC 2396)</name>
    <dbReference type="NCBI Taxonomy" id="349521"/>
    <lineage>
        <taxon>Bacteria</taxon>
        <taxon>Pseudomonadati</taxon>
        <taxon>Pseudomonadota</taxon>
        <taxon>Gammaproteobacteria</taxon>
        <taxon>Oceanospirillales</taxon>
        <taxon>Hahellaceae</taxon>
        <taxon>Hahella</taxon>
    </lineage>
</organism>
<proteinExistence type="inferred from homology"/>
<protein>
    <recommendedName>
        <fullName evidence="1">Ion-translocating oxidoreductase complex subunit A</fullName>
        <ecNumber evidence="1">7.-.-.-</ecNumber>
    </recommendedName>
    <alternativeName>
        <fullName evidence="1">Rnf electron transport complex subunit A</fullName>
    </alternativeName>
</protein>
<feature type="chain" id="PRO_1000013534" description="Ion-translocating oxidoreductase complex subunit A">
    <location>
        <begin position="1"/>
        <end position="193"/>
    </location>
</feature>
<feature type="transmembrane region" description="Helical" evidence="1">
    <location>
        <begin position="5"/>
        <end position="25"/>
    </location>
</feature>
<feature type="transmembrane region" description="Helical" evidence="1">
    <location>
        <begin position="38"/>
        <end position="58"/>
    </location>
</feature>
<feature type="transmembrane region" description="Helical" evidence="1">
    <location>
        <begin position="65"/>
        <end position="85"/>
    </location>
</feature>
<feature type="transmembrane region" description="Helical" evidence="1">
    <location>
        <begin position="102"/>
        <end position="122"/>
    </location>
</feature>
<feature type="transmembrane region" description="Helical" evidence="1">
    <location>
        <begin position="134"/>
        <end position="154"/>
    </location>
</feature>
<feature type="transmembrane region" description="Helical" evidence="1">
    <location>
        <begin position="171"/>
        <end position="191"/>
    </location>
</feature>
<comment type="function">
    <text evidence="1">Part of a membrane-bound complex that couples electron transfer with translocation of ions across the membrane.</text>
</comment>
<comment type="subunit">
    <text evidence="1">The complex is composed of six subunits: RnfA, RnfB, RnfC, RnfD, RnfE and RnfG.</text>
</comment>
<comment type="subcellular location">
    <subcellularLocation>
        <location evidence="1">Cell inner membrane</location>
        <topology evidence="1">Multi-pass membrane protein</topology>
    </subcellularLocation>
</comment>
<comment type="similarity">
    <text evidence="1">Belongs to the NqrDE/RnfAE family.</text>
</comment>
<reference key="1">
    <citation type="journal article" date="2005" name="Nucleic Acids Res.">
        <title>Genomic blueprint of Hahella chejuensis, a marine microbe producing an algicidal agent.</title>
        <authorList>
            <person name="Jeong H."/>
            <person name="Yim J.H."/>
            <person name="Lee C."/>
            <person name="Choi S.-H."/>
            <person name="Park Y.K."/>
            <person name="Yoon S.H."/>
            <person name="Hur C.-G."/>
            <person name="Kang H.-Y."/>
            <person name="Kim D."/>
            <person name="Lee H.H."/>
            <person name="Park K.H."/>
            <person name="Park S.-H."/>
            <person name="Park H.-S."/>
            <person name="Lee H.K."/>
            <person name="Oh T.K."/>
            <person name="Kim J.F."/>
        </authorList>
    </citation>
    <scope>NUCLEOTIDE SEQUENCE [LARGE SCALE GENOMIC DNA]</scope>
    <source>
        <strain>KCTC 2396</strain>
    </source>
</reference>
<accession>Q2SKU4</accession>
<dbReference type="EC" id="7.-.-.-" evidence="1"/>
<dbReference type="EMBL" id="CP000155">
    <property type="protein sequence ID" value="ABC28730.1"/>
    <property type="molecule type" value="Genomic_DNA"/>
</dbReference>
<dbReference type="SMR" id="Q2SKU4"/>
<dbReference type="STRING" id="349521.HCH_01895"/>
<dbReference type="KEGG" id="hch:HCH_01895"/>
<dbReference type="eggNOG" id="COG4657">
    <property type="taxonomic scope" value="Bacteria"/>
</dbReference>
<dbReference type="HOGENOM" id="CLU_095255_1_0_6"/>
<dbReference type="OrthoDB" id="9803631at2"/>
<dbReference type="Proteomes" id="UP000000238">
    <property type="component" value="Chromosome"/>
</dbReference>
<dbReference type="GO" id="GO:0005886">
    <property type="term" value="C:plasma membrane"/>
    <property type="evidence" value="ECO:0007669"/>
    <property type="project" value="UniProtKB-SubCell"/>
</dbReference>
<dbReference type="GO" id="GO:0022900">
    <property type="term" value="P:electron transport chain"/>
    <property type="evidence" value="ECO:0007669"/>
    <property type="project" value="UniProtKB-UniRule"/>
</dbReference>
<dbReference type="HAMAP" id="MF_00459">
    <property type="entry name" value="RsxA_RnfA"/>
    <property type="match status" value="1"/>
</dbReference>
<dbReference type="InterPro" id="IPR011293">
    <property type="entry name" value="Ion_transpt_RnfA/RsxA"/>
</dbReference>
<dbReference type="InterPro" id="IPR003667">
    <property type="entry name" value="NqrDE/RnfAE"/>
</dbReference>
<dbReference type="InterPro" id="IPR050133">
    <property type="entry name" value="NqrDE/RnfAE_oxidrdctase"/>
</dbReference>
<dbReference type="NCBIfam" id="NF003481">
    <property type="entry name" value="PRK05151.1"/>
    <property type="match status" value="1"/>
</dbReference>
<dbReference type="NCBIfam" id="TIGR01943">
    <property type="entry name" value="rnfA"/>
    <property type="match status" value="1"/>
</dbReference>
<dbReference type="PANTHER" id="PTHR30335">
    <property type="entry name" value="INTEGRAL MEMBRANE PROTEIN OF SOXR-REDUCING COMPLEX"/>
    <property type="match status" value="1"/>
</dbReference>
<dbReference type="PANTHER" id="PTHR30335:SF0">
    <property type="entry name" value="ION-TRANSLOCATING OXIDOREDUCTASE COMPLEX SUBUNIT A"/>
    <property type="match status" value="1"/>
</dbReference>
<dbReference type="Pfam" id="PF02508">
    <property type="entry name" value="Rnf-Nqr"/>
    <property type="match status" value="1"/>
</dbReference>
<dbReference type="PIRSF" id="PIRSF006102">
    <property type="entry name" value="NQR_DE"/>
    <property type="match status" value="1"/>
</dbReference>
<gene>
    <name evidence="1" type="primary">rnfA</name>
    <name type="ordered locus">HCH_01895</name>
</gene>
<evidence type="ECO:0000255" key="1">
    <source>
        <dbReference type="HAMAP-Rule" id="MF_00459"/>
    </source>
</evidence>
<sequence>MTEYLLILVSTILVNNFVLVQFLGLCPFMGVSNKLETAMGMSLATTFVLTLSSLCSYLAYEYLLAPLGMEFLKTITFILVIAVVVQFTEMVIKKTSPLLYRVLGIFLPLITTNCAVLGVALLNIKKQNDFMESILYGFGAAVGFSLVLTLFSAMRERIAAADVPEPFKGGAIGMITAGLMSLAFLGFTGLVNI</sequence>
<name>RNFA_HAHCH</name>